<reference key="1">
    <citation type="journal article" date="2009" name="PLoS ONE">
        <title>Genome sequence of the endosymbiont Rickettsia peacockii and comparison with virulent Rickettsia rickettsii: identification of virulence factors.</title>
        <authorList>
            <person name="Felsheim R.F."/>
            <person name="Kurtti T.J."/>
            <person name="Munderloh U.G."/>
        </authorList>
    </citation>
    <scope>NUCLEOTIDE SEQUENCE [LARGE SCALE GENOMIC DNA]</scope>
    <source>
        <strain>Rustic</strain>
    </source>
</reference>
<gene>
    <name evidence="1" type="primary">rplF</name>
    <name type="ordered locus">RPR_06155</name>
</gene>
<protein>
    <recommendedName>
        <fullName evidence="1">Large ribosomal subunit protein uL6</fullName>
    </recommendedName>
    <alternativeName>
        <fullName evidence="2">50S ribosomal protein L6</fullName>
    </alternativeName>
</protein>
<name>RL6_RICPU</name>
<comment type="function">
    <text evidence="1">This protein binds to the 23S rRNA, and is important in its secondary structure. It is located near the subunit interface in the base of the L7/L12 stalk, and near the tRNA binding site of the peptidyltransferase center.</text>
</comment>
<comment type="subunit">
    <text evidence="1">Part of the 50S ribosomal subunit.</text>
</comment>
<comment type="similarity">
    <text evidence="1">Belongs to the universal ribosomal protein uL6 family.</text>
</comment>
<accession>C4K2G4</accession>
<keyword id="KW-0687">Ribonucleoprotein</keyword>
<keyword id="KW-0689">Ribosomal protein</keyword>
<keyword id="KW-0694">RNA-binding</keyword>
<keyword id="KW-0699">rRNA-binding</keyword>
<dbReference type="EMBL" id="CP001227">
    <property type="protein sequence ID" value="ACR47761.1"/>
    <property type="molecule type" value="Genomic_DNA"/>
</dbReference>
<dbReference type="RefSeq" id="WP_012736941.1">
    <property type="nucleotide sequence ID" value="NC_012730.1"/>
</dbReference>
<dbReference type="SMR" id="C4K2G4"/>
<dbReference type="KEGG" id="rpk:RPR_06155"/>
<dbReference type="HOGENOM" id="CLU_065464_1_2_5"/>
<dbReference type="Proteomes" id="UP000005015">
    <property type="component" value="Chromosome"/>
</dbReference>
<dbReference type="GO" id="GO:1990904">
    <property type="term" value="C:ribonucleoprotein complex"/>
    <property type="evidence" value="ECO:0007669"/>
    <property type="project" value="UniProtKB-KW"/>
</dbReference>
<dbReference type="GO" id="GO:0005840">
    <property type="term" value="C:ribosome"/>
    <property type="evidence" value="ECO:0007669"/>
    <property type="project" value="UniProtKB-KW"/>
</dbReference>
<dbReference type="GO" id="GO:0019843">
    <property type="term" value="F:rRNA binding"/>
    <property type="evidence" value="ECO:0007669"/>
    <property type="project" value="UniProtKB-UniRule"/>
</dbReference>
<dbReference type="GO" id="GO:0003735">
    <property type="term" value="F:structural constituent of ribosome"/>
    <property type="evidence" value="ECO:0007669"/>
    <property type="project" value="InterPro"/>
</dbReference>
<dbReference type="GO" id="GO:0002181">
    <property type="term" value="P:cytoplasmic translation"/>
    <property type="evidence" value="ECO:0007669"/>
    <property type="project" value="TreeGrafter"/>
</dbReference>
<dbReference type="FunFam" id="3.90.930.12:FF:000002">
    <property type="entry name" value="50S ribosomal protein L6"/>
    <property type="match status" value="1"/>
</dbReference>
<dbReference type="Gene3D" id="3.90.930.12">
    <property type="entry name" value="Ribosomal protein L6, alpha-beta domain"/>
    <property type="match status" value="2"/>
</dbReference>
<dbReference type="HAMAP" id="MF_01365_B">
    <property type="entry name" value="Ribosomal_uL6_B"/>
    <property type="match status" value="1"/>
</dbReference>
<dbReference type="InterPro" id="IPR000702">
    <property type="entry name" value="Ribosomal_uL6-like"/>
</dbReference>
<dbReference type="InterPro" id="IPR036789">
    <property type="entry name" value="Ribosomal_uL6-like_a/b-dom_sf"/>
</dbReference>
<dbReference type="InterPro" id="IPR020040">
    <property type="entry name" value="Ribosomal_uL6_a/b-dom"/>
</dbReference>
<dbReference type="InterPro" id="IPR019906">
    <property type="entry name" value="Ribosomal_uL6_bac-type"/>
</dbReference>
<dbReference type="InterPro" id="IPR002358">
    <property type="entry name" value="Ribosomal_uL6_CS"/>
</dbReference>
<dbReference type="NCBIfam" id="TIGR03654">
    <property type="entry name" value="L6_bact"/>
    <property type="match status" value="1"/>
</dbReference>
<dbReference type="PANTHER" id="PTHR11655">
    <property type="entry name" value="60S/50S RIBOSOMAL PROTEIN L6/L9"/>
    <property type="match status" value="1"/>
</dbReference>
<dbReference type="PANTHER" id="PTHR11655:SF14">
    <property type="entry name" value="LARGE RIBOSOMAL SUBUNIT PROTEIN UL6M"/>
    <property type="match status" value="1"/>
</dbReference>
<dbReference type="Pfam" id="PF00347">
    <property type="entry name" value="Ribosomal_L6"/>
    <property type="match status" value="2"/>
</dbReference>
<dbReference type="PIRSF" id="PIRSF002162">
    <property type="entry name" value="Ribosomal_L6"/>
    <property type="match status" value="1"/>
</dbReference>
<dbReference type="PRINTS" id="PR00059">
    <property type="entry name" value="RIBOSOMALL6"/>
</dbReference>
<dbReference type="SUPFAM" id="SSF56053">
    <property type="entry name" value="Ribosomal protein L6"/>
    <property type="match status" value="2"/>
</dbReference>
<dbReference type="PROSITE" id="PS00525">
    <property type="entry name" value="RIBOSOMAL_L6_1"/>
    <property type="match status" value="1"/>
</dbReference>
<sequence length="177" mass="19564">MSRVGKLPIAIPEGVKIGLNDLEVKISGPKGELSKTFKGNIAISLAENKLLVKPLAANKNVRAMWGTARSIISNMVTGVKEGFKLKLEINGVGYRAMVKGKYLNLMLAKSHNTKIEIPSDIKIEMPKQNIIILEGTDKEKLGQFASIIIKQRPPEPYKGKGIKFENQFIPRKEGKKN</sequence>
<evidence type="ECO:0000255" key="1">
    <source>
        <dbReference type="HAMAP-Rule" id="MF_01365"/>
    </source>
</evidence>
<evidence type="ECO:0000305" key="2"/>
<proteinExistence type="inferred from homology"/>
<organism>
    <name type="scientific">Rickettsia peacockii (strain Rustic)</name>
    <dbReference type="NCBI Taxonomy" id="562019"/>
    <lineage>
        <taxon>Bacteria</taxon>
        <taxon>Pseudomonadati</taxon>
        <taxon>Pseudomonadota</taxon>
        <taxon>Alphaproteobacteria</taxon>
        <taxon>Rickettsiales</taxon>
        <taxon>Rickettsiaceae</taxon>
        <taxon>Rickettsieae</taxon>
        <taxon>Rickettsia</taxon>
        <taxon>spotted fever group</taxon>
    </lineage>
</organism>
<feature type="chain" id="PRO_1000214936" description="Large ribosomal subunit protein uL6">
    <location>
        <begin position="1"/>
        <end position="177"/>
    </location>
</feature>